<reference key="1">
    <citation type="journal article" date="2010" name="Appl. Environ. Microbiol.">
        <title>Conserved symbiotic plasmid DNA sequences in the multireplicon pangenomic structure of Rhizobium etli.</title>
        <authorList>
            <person name="Gonzalez V."/>
            <person name="Acosta J.L."/>
            <person name="Santamaria R.I."/>
            <person name="Bustos P."/>
            <person name="Fernandez J.L."/>
            <person name="Hernandez Gonzalez I.L."/>
            <person name="Diaz R."/>
            <person name="Flores M."/>
            <person name="Palacios R."/>
            <person name="Mora J."/>
            <person name="Davila G."/>
        </authorList>
    </citation>
    <scope>NUCLEOTIDE SEQUENCE [LARGE SCALE GENOMIC DNA]</scope>
    <source>
        <strain>CIAT 652</strain>
    </source>
</reference>
<evidence type="ECO:0000255" key="1">
    <source>
        <dbReference type="HAMAP-Rule" id="MF_01588"/>
    </source>
</evidence>
<proteinExistence type="inferred from homology"/>
<protein>
    <recommendedName>
        <fullName evidence="1">DNA ligase</fullName>
        <ecNumber evidence="1">6.5.1.2</ecNumber>
    </recommendedName>
    <alternativeName>
        <fullName evidence="1">Polydeoxyribonucleotide synthase [NAD(+)]</fullName>
    </alternativeName>
</protein>
<name>DNLJ_RHIE6</name>
<comment type="function">
    <text evidence="1">DNA ligase that catalyzes the formation of phosphodiester linkages between 5'-phosphoryl and 3'-hydroxyl groups in double-stranded DNA using NAD as a coenzyme and as the energy source for the reaction. It is essential for DNA replication and repair of damaged DNA.</text>
</comment>
<comment type="catalytic activity">
    <reaction evidence="1">
        <text>NAD(+) + (deoxyribonucleotide)n-3'-hydroxyl + 5'-phospho-(deoxyribonucleotide)m = (deoxyribonucleotide)n+m + AMP + beta-nicotinamide D-nucleotide.</text>
        <dbReference type="EC" id="6.5.1.2"/>
    </reaction>
</comment>
<comment type="cofactor">
    <cofactor evidence="1">
        <name>Mg(2+)</name>
        <dbReference type="ChEBI" id="CHEBI:18420"/>
    </cofactor>
    <cofactor evidence="1">
        <name>Mn(2+)</name>
        <dbReference type="ChEBI" id="CHEBI:29035"/>
    </cofactor>
</comment>
<comment type="similarity">
    <text evidence="1">Belongs to the NAD-dependent DNA ligase family. LigA subfamily.</text>
</comment>
<keyword id="KW-0227">DNA damage</keyword>
<keyword id="KW-0234">DNA repair</keyword>
<keyword id="KW-0235">DNA replication</keyword>
<keyword id="KW-0436">Ligase</keyword>
<keyword id="KW-0460">Magnesium</keyword>
<keyword id="KW-0464">Manganese</keyword>
<keyword id="KW-0479">Metal-binding</keyword>
<keyword id="KW-0520">NAD</keyword>
<keyword id="KW-0862">Zinc</keyword>
<organism>
    <name type="scientific">Rhizobium etli (strain CIAT 652)</name>
    <dbReference type="NCBI Taxonomy" id="491916"/>
    <lineage>
        <taxon>Bacteria</taxon>
        <taxon>Pseudomonadati</taxon>
        <taxon>Pseudomonadota</taxon>
        <taxon>Alphaproteobacteria</taxon>
        <taxon>Hyphomicrobiales</taxon>
        <taxon>Rhizobiaceae</taxon>
        <taxon>Rhizobium/Agrobacterium group</taxon>
        <taxon>Rhizobium</taxon>
    </lineage>
</organism>
<sequence>MSTEGSAVDTLTIEEAAAELERLAKEIAHHDALYHGKDQPEISDADYDALKRRNDALEARFPELIREDSPSRHVGAAPSVTFSPVVHARPMLSLDNTFSQEDVQDFVAGVYRFLGRLPDQSIAFTAEPKIDGLSMSIRYENGRLVTAATRGDGTTGENVTANIRTIAEIPNELPKGVPAVVEIRGEVYMAKSDFLALNRQMEAEGKQTYVNPRNTAAGSLRQLDAKVTASRKLKFFAYAWGEMAEMPADTQFGMVQTFKDWGFPVNPLMKRLNSVADILAHYDEIGLERPDLDYDIDGVVYKVDSLELQQRLGFRSRSPRWATAHKFPAEQAFTEVEKIEIQVGRTGALTPVARLKPITVGGVVVTNATLHNEDYIKGIGNSGERIRPEEHDIREGDTVIVQRAGDVIPQILDVVMEKRAADARSYEFPKTCPVCGSHAVREVNEKTGKTDSVRRCTGGFICRAQATEHLKHFVSRNAFDIEGLGSKQVDFFFENEDPSLQIRTAPEIFTLEKRQQDSLTKLENIDGFGKVSVGKLYAAINERRSIALHRFIYALGIRHVGETTAKLLARSYGTYEAFATAMKEAAPLSGEAWTDLNAIEGIGEVVARAMVEFYKEPRNVEVIGRLLDEVTPAEAEQPVTAGSPVAGKTVVFTGSLEKFTRDEAKARAESLGAKVAGSVSKKTDIVVAGPGAGSKLDKARELGVQTMDEDEWLALISG</sequence>
<gene>
    <name evidence="1" type="primary">ligA</name>
    <name type="ordered locus">RHECIAT_CH0002985</name>
</gene>
<dbReference type="EC" id="6.5.1.2" evidence="1"/>
<dbReference type="EMBL" id="CP001074">
    <property type="protein sequence ID" value="ACE91934.1"/>
    <property type="molecule type" value="Genomic_DNA"/>
</dbReference>
<dbReference type="SMR" id="B3PTU7"/>
<dbReference type="KEGG" id="rec:RHECIAT_CH0002985"/>
<dbReference type="eggNOG" id="COG0272">
    <property type="taxonomic scope" value="Bacteria"/>
</dbReference>
<dbReference type="HOGENOM" id="CLU_007764_2_1_5"/>
<dbReference type="Proteomes" id="UP000008817">
    <property type="component" value="Chromosome"/>
</dbReference>
<dbReference type="GO" id="GO:0005829">
    <property type="term" value="C:cytosol"/>
    <property type="evidence" value="ECO:0007669"/>
    <property type="project" value="TreeGrafter"/>
</dbReference>
<dbReference type="GO" id="GO:0003677">
    <property type="term" value="F:DNA binding"/>
    <property type="evidence" value="ECO:0007669"/>
    <property type="project" value="InterPro"/>
</dbReference>
<dbReference type="GO" id="GO:0003911">
    <property type="term" value="F:DNA ligase (NAD+) activity"/>
    <property type="evidence" value="ECO:0007669"/>
    <property type="project" value="UniProtKB-UniRule"/>
</dbReference>
<dbReference type="GO" id="GO:0046872">
    <property type="term" value="F:metal ion binding"/>
    <property type="evidence" value="ECO:0007669"/>
    <property type="project" value="UniProtKB-KW"/>
</dbReference>
<dbReference type="GO" id="GO:0006281">
    <property type="term" value="P:DNA repair"/>
    <property type="evidence" value="ECO:0007669"/>
    <property type="project" value="UniProtKB-KW"/>
</dbReference>
<dbReference type="GO" id="GO:0006260">
    <property type="term" value="P:DNA replication"/>
    <property type="evidence" value="ECO:0007669"/>
    <property type="project" value="UniProtKB-KW"/>
</dbReference>
<dbReference type="CDD" id="cd17748">
    <property type="entry name" value="BRCT_DNA_ligase_like"/>
    <property type="match status" value="1"/>
</dbReference>
<dbReference type="CDD" id="cd00114">
    <property type="entry name" value="LIGANc"/>
    <property type="match status" value="1"/>
</dbReference>
<dbReference type="FunFam" id="3.30.470.30:FF:000001">
    <property type="entry name" value="DNA ligase"/>
    <property type="match status" value="1"/>
</dbReference>
<dbReference type="Gene3D" id="6.20.10.30">
    <property type="match status" value="1"/>
</dbReference>
<dbReference type="Gene3D" id="1.10.150.20">
    <property type="entry name" value="5' to 3' exonuclease, C-terminal subdomain"/>
    <property type="match status" value="2"/>
</dbReference>
<dbReference type="Gene3D" id="3.40.50.10190">
    <property type="entry name" value="BRCT domain"/>
    <property type="match status" value="1"/>
</dbReference>
<dbReference type="Gene3D" id="3.30.470.30">
    <property type="entry name" value="DNA ligase/mRNA capping enzyme"/>
    <property type="match status" value="1"/>
</dbReference>
<dbReference type="Gene3D" id="1.10.287.610">
    <property type="entry name" value="Helix hairpin bin"/>
    <property type="match status" value="1"/>
</dbReference>
<dbReference type="Gene3D" id="2.40.50.140">
    <property type="entry name" value="Nucleic acid-binding proteins"/>
    <property type="match status" value="1"/>
</dbReference>
<dbReference type="HAMAP" id="MF_01588">
    <property type="entry name" value="DNA_ligase_A"/>
    <property type="match status" value="1"/>
</dbReference>
<dbReference type="InterPro" id="IPR001357">
    <property type="entry name" value="BRCT_dom"/>
</dbReference>
<dbReference type="InterPro" id="IPR036420">
    <property type="entry name" value="BRCT_dom_sf"/>
</dbReference>
<dbReference type="InterPro" id="IPR041663">
    <property type="entry name" value="DisA/LigA_HHH"/>
</dbReference>
<dbReference type="InterPro" id="IPR001679">
    <property type="entry name" value="DNA_ligase"/>
</dbReference>
<dbReference type="InterPro" id="IPR018239">
    <property type="entry name" value="DNA_ligase_AS"/>
</dbReference>
<dbReference type="InterPro" id="IPR033136">
    <property type="entry name" value="DNA_ligase_CS"/>
</dbReference>
<dbReference type="InterPro" id="IPR013839">
    <property type="entry name" value="DNAligase_adenylation"/>
</dbReference>
<dbReference type="InterPro" id="IPR013840">
    <property type="entry name" value="DNAligase_N"/>
</dbReference>
<dbReference type="InterPro" id="IPR003583">
    <property type="entry name" value="Hlx-hairpin-Hlx_DNA-bd_motif"/>
</dbReference>
<dbReference type="InterPro" id="IPR012340">
    <property type="entry name" value="NA-bd_OB-fold"/>
</dbReference>
<dbReference type="InterPro" id="IPR004150">
    <property type="entry name" value="NAD_DNA_ligase_OB"/>
</dbReference>
<dbReference type="InterPro" id="IPR010994">
    <property type="entry name" value="RuvA_2-like"/>
</dbReference>
<dbReference type="InterPro" id="IPR004149">
    <property type="entry name" value="Znf_DNAligase_C4"/>
</dbReference>
<dbReference type="NCBIfam" id="TIGR00575">
    <property type="entry name" value="dnlj"/>
    <property type="match status" value="1"/>
</dbReference>
<dbReference type="NCBIfam" id="NF005932">
    <property type="entry name" value="PRK07956.1"/>
    <property type="match status" value="1"/>
</dbReference>
<dbReference type="PANTHER" id="PTHR23389">
    <property type="entry name" value="CHROMOSOME TRANSMISSION FIDELITY FACTOR 18"/>
    <property type="match status" value="1"/>
</dbReference>
<dbReference type="PANTHER" id="PTHR23389:SF9">
    <property type="entry name" value="DNA LIGASE"/>
    <property type="match status" value="1"/>
</dbReference>
<dbReference type="Pfam" id="PF00533">
    <property type="entry name" value="BRCT"/>
    <property type="match status" value="1"/>
</dbReference>
<dbReference type="Pfam" id="PF01653">
    <property type="entry name" value="DNA_ligase_aden"/>
    <property type="match status" value="1"/>
</dbReference>
<dbReference type="Pfam" id="PF03120">
    <property type="entry name" value="DNA_ligase_OB"/>
    <property type="match status" value="1"/>
</dbReference>
<dbReference type="Pfam" id="PF03119">
    <property type="entry name" value="DNA_ligase_ZBD"/>
    <property type="match status" value="1"/>
</dbReference>
<dbReference type="Pfam" id="PF12826">
    <property type="entry name" value="HHH_2"/>
    <property type="match status" value="1"/>
</dbReference>
<dbReference type="PIRSF" id="PIRSF001604">
    <property type="entry name" value="LigA"/>
    <property type="match status" value="1"/>
</dbReference>
<dbReference type="SMART" id="SM00292">
    <property type="entry name" value="BRCT"/>
    <property type="match status" value="1"/>
</dbReference>
<dbReference type="SMART" id="SM00278">
    <property type="entry name" value="HhH1"/>
    <property type="match status" value="3"/>
</dbReference>
<dbReference type="SMART" id="SM00532">
    <property type="entry name" value="LIGANc"/>
    <property type="match status" value="1"/>
</dbReference>
<dbReference type="SUPFAM" id="SSF52113">
    <property type="entry name" value="BRCT domain"/>
    <property type="match status" value="1"/>
</dbReference>
<dbReference type="SUPFAM" id="SSF56091">
    <property type="entry name" value="DNA ligase/mRNA capping enzyme, catalytic domain"/>
    <property type="match status" value="1"/>
</dbReference>
<dbReference type="SUPFAM" id="SSF50249">
    <property type="entry name" value="Nucleic acid-binding proteins"/>
    <property type="match status" value="1"/>
</dbReference>
<dbReference type="SUPFAM" id="SSF47781">
    <property type="entry name" value="RuvA domain 2-like"/>
    <property type="match status" value="1"/>
</dbReference>
<dbReference type="PROSITE" id="PS50172">
    <property type="entry name" value="BRCT"/>
    <property type="match status" value="1"/>
</dbReference>
<dbReference type="PROSITE" id="PS01055">
    <property type="entry name" value="DNA_LIGASE_N1"/>
    <property type="match status" value="1"/>
</dbReference>
<dbReference type="PROSITE" id="PS01056">
    <property type="entry name" value="DNA_LIGASE_N2"/>
    <property type="match status" value="1"/>
</dbReference>
<accession>B3PTU7</accession>
<feature type="chain" id="PRO_0000380451" description="DNA ligase">
    <location>
        <begin position="1"/>
        <end position="718"/>
    </location>
</feature>
<feature type="domain" description="BRCT" evidence="1">
    <location>
        <begin position="640"/>
        <end position="718"/>
    </location>
</feature>
<feature type="active site" description="N6-AMP-lysine intermediate" evidence="1">
    <location>
        <position position="129"/>
    </location>
</feature>
<feature type="binding site" evidence="1">
    <location>
        <begin position="44"/>
        <end position="48"/>
    </location>
    <ligand>
        <name>NAD(+)</name>
        <dbReference type="ChEBI" id="CHEBI:57540"/>
    </ligand>
</feature>
<feature type="binding site" evidence="1">
    <location>
        <begin position="93"/>
        <end position="94"/>
    </location>
    <ligand>
        <name>NAD(+)</name>
        <dbReference type="ChEBI" id="CHEBI:57540"/>
    </ligand>
</feature>
<feature type="binding site" evidence="1">
    <location>
        <position position="127"/>
    </location>
    <ligand>
        <name>NAD(+)</name>
        <dbReference type="ChEBI" id="CHEBI:57540"/>
    </ligand>
</feature>
<feature type="binding site" evidence="1">
    <location>
        <position position="150"/>
    </location>
    <ligand>
        <name>NAD(+)</name>
        <dbReference type="ChEBI" id="CHEBI:57540"/>
    </ligand>
</feature>
<feature type="binding site" evidence="1">
    <location>
        <position position="186"/>
    </location>
    <ligand>
        <name>NAD(+)</name>
        <dbReference type="ChEBI" id="CHEBI:57540"/>
    </ligand>
</feature>
<feature type="binding site" evidence="1">
    <location>
        <position position="302"/>
    </location>
    <ligand>
        <name>NAD(+)</name>
        <dbReference type="ChEBI" id="CHEBI:57540"/>
    </ligand>
</feature>
<feature type="binding site" evidence="1">
    <location>
        <position position="326"/>
    </location>
    <ligand>
        <name>NAD(+)</name>
        <dbReference type="ChEBI" id="CHEBI:57540"/>
    </ligand>
</feature>
<feature type="binding site" evidence="1">
    <location>
        <position position="432"/>
    </location>
    <ligand>
        <name>Zn(2+)</name>
        <dbReference type="ChEBI" id="CHEBI:29105"/>
    </ligand>
</feature>
<feature type="binding site" evidence="1">
    <location>
        <position position="435"/>
    </location>
    <ligand>
        <name>Zn(2+)</name>
        <dbReference type="ChEBI" id="CHEBI:29105"/>
    </ligand>
</feature>
<feature type="binding site" evidence="1">
    <location>
        <position position="456"/>
    </location>
    <ligand>
        <name>Zn(2+)</name>
        <dbReference type="ChEBI" id="CHEBI:29105"/>
    </ligand>
</feature>
<feature type="binding site" evidence="1">
    <location>
        <position position="462"/>
    </location>
    <ligand>
        <name>Zn(2+)</name>
        <dbReference type="ChEBI" id="CHEBI:29105"/>
    </ligand>
</feature>